<accession>Q84V03</accession>
<accession>Q1PF61</accession>
<accession>Q94B23</accession>
<accession>Q9SIW6</accession>
<protein>
    <recommendedName>
        <fullName evidence="6">Protein PHOTOPERIODIC CONTROL OF HYPOCOTYL 1</fullName>
    </recommendedName>
    <alternativeName>
        <fullName>F-box protein PCH1</fullName>
    </alternativeName>
</protein>
<evidence type="ECO:0000256" key="1">
    <source>
        <dbReference type="SAM" id="MobiDB-lite"/>
    </source>
</evidence>
<evidence type="ECO:0000269" key="2">
    <source>
    </source>
</evidence>
<evidence type="ECO:0000269" key="3">
    <source>
    </source>
</evidence>
<evidence type="ECO:0000303" key="4">
    <source>
    </source>
</evidence>
<evidence type="ECO:0000303" key="5">
    <source>
    </source>
</evidence>
<evidence type="ECO:0000303" key="6">
    <source>
    </source>
</evidence>
<evidence type="ECO:0000305" key="7"/>
<evidence type="ECO:0000312" key="8">
    <source>
        <dbReference type="Araport" id="AT2G16365"/>
    </source>
</evidence>
<evidence type="ECO:0000312" key="9">
    <source>
        <dbReference type="EMBL" id="AAD22304.2"/>
    </source>
</evidence>
<gene>
    <name evidence="6" type="primary">PCH1</name>
    <name evidence="8" type="ordered locus">At2g16365</name>
    <name evidence="9" type="ORF">F16F14.15</name>
</gene>
<keyword id="KW-0025">Alternative splicing</keyword>
<keyword id="KW-0539">Nucleus</keyword>
<keyword id="KW-1185">Reference proteome</keyword>
<keyword id="KW-0832">Ubl conjugation</keyword>
<reference key="1">
    <citation type="journal article" date="1999" name="Nature">
        <title>Sequence and analysis of chromosome 2 of the plant Arabidopsis thaliana.</title>
        <authorList>
            <person name="Lin X."/>
            <person name="Kaul S."/>
            <person name="Rounsley S.D."/>
            <person name="Shea T.P."/>
            <person name="Benito M.-I."/>
            <person name="Town C.D."/>
            <person name="Fujii C.Y."/>
            <person name="Mason T.M."/>
            <person name="Bowman C.L."/>
            <person name="Barnstead M.E."/>
            <person name="Feldblyum T.V."/>
            <person name="Buell C.R."/>
            <person name="Ketchum K.A."/>
            <person name="Lee J.J."/>
            <person name="Ronning C.M."/>
            <person name="Koo H.L."/>
            <person name="Moffat K.S."/>
            <person name="Cronin L.A."/>
            <person name="Shen M."/>
            <person name="Pai G."/>
            <person name="Van Aken S."/>
            <person name="Umayam L."/>
            <person name="Tallon L.J."/>
            <person name="Gill J.E."/>
            <person name="Adams M.D."/>
            <person name="Carrera A.J."/>
            <person name="Creasy T.H."/>
            <person name="Goodman H.M."/>
            <person name="Somerville C.R."/>
            <person name="Copenhaver G.P."/>
            <person name="Preuss D."/>
            <person name="Nierman W.C."/>
            <person name="White O."/>
            <person name="Eisen J.A."/>
            <person name="Salzberg S.L."/>
            <person name="Fraser C.M."/>
            <person name="Venter J.C."/>
        </authorList>
    </citation>
    <scope>NUCLEOTIDE SEQUENCE [LARGE SCALE GENOMIC DNA]</scope>
    <source>
        <strain>cv. Columbia</strain>
    </source>
</reference>
<reference key="2">
    <citation type="journal article" date="2017" name="Plant J.">
        <title>Araport11: a complete reannotation of the Arabidopsis thaliana reference genome.</title>
        <authorList>
            <person name="Cheng C.Y."/>
            <person name="Krishnakumar V."/>
            <person name="Chan A.P."/>
            <person name="Thibaud-Nissen F."/>
            <person name="Schobel S."/>
            <person name="Town C.D."/>
        </authorList>
    </citation>
    <scope>GENOME REANNOTATION</scope>
    <source>
        <strain>cv. Columbia</strain>
    </source>
</reference>
<reference key="3">
    <citation type="journal article" date="2003" name="Science">
        <title>Empirical analysis of transcriptional activity in the Arabidopsis genome.</title>
        <authorList>
            <person name="Yamada K."/>
            <person name="Lim J."/>
            <person name="Dale J.M."/>
            <person name="Chen H."/>
            <person name="Shinn P."/>
            <person name="Palm C.J."/>
            <person name="Southwick A.M."/>
            <person name="Wu H.C."/>
            <person name="Kim C.J."/>
            <person name="Nguyen M."/>
            <person name="Pham P.K."/>
            <person name="Cheuk R.F."/>
            <person name="Karlin-Newmann G."/>
            <person name="Liu S.X."/>
            <person name="Lam B."/>
            <person name="Sakano H."/>
            <person name="Wu T."/>
            <person name="Yu G."/>
            <person name="Miranda M."/>
            <person name="Quach H.L."/>
            <person name="Tripp M."/>
            <person name="Chang C.H."/>
            <person name="Lee J.M."/>
            <person name="Toriumi M.J."/>
            <person name="Chan M.M."/>
            <person name="Tang C.C."/>
            <person name="Onodera C.S."/>
            <person name="Deng J.M."/>
            <person name="Akiyama K."/>
            <person name="Ansari Y."/>
            <person name="Arakawa T."/>
            <person name="Banh J."/>
            <person name="Banno F."/>
            <person name="Bowser L."/>
            <person name="Brooks S.Y."/>
            <person name="Carninci P."/>
            <person name="Chao Q."/>
            <person name="Choy N."/>
            <person name="Enju A."/>
            <person name="Goldsmith A.D."/>
            <person name="Gurjal M."/>
            <person name="Hansen N.F."/>
            <person name="Hayashizaki Y."/>
            <person name="Johnson-Hopson C."/>
            <person name="Hsuan V.W."/>
            <person name="Iida K."/>
            <person name="Karnes M."/>
            <person name="Khan S."/>
            <person name="Koesema E."/>
            <person name="Ishida J."/>
            <person name="Jiang P.X."/>
            <person name="Jones T."/>
            <person name="Kawai J."/>
            <person name="Kamiya A."/>
            <person name="Meyers C."/>
            <person name="Nakajima M."/>
            <person name="Narusaka M."/>
            <person name="Seki M."/>
            <person name="Sakurai T."/>
            <person name="Satou M."/>
            <person name="Tamse R."/>
            <person name="Vaysberg M."/>
            <person name="Wallender E.K."/>
            <person name="Wong C."/>
            <person name="Yamamura Y."/>
            <person name="Yuan S."/>
            <person name="Shinozaki K."/>
            <person name="Davis R.W."/>
            <person name="Theologis A."/>
            <person name="Ecker J.R."/>
        </authorList>
    </citation>
    <scope>NUCLEOTIDE SEQUENCE [LARGE SCALE MRNA] (ISOFORM 2)</scope>
    <source>
        <strain>cv. Columbia</strain>
    </source>
</reference>
<reference key="4">
    <citation type="journal article" date="2002" name="Plant Physiol.">
        <title>Cloning and sequencing of cDNAs for hypothetical genes from chromosome 2 of Arabidopsis.</title>
        <authorList>
            <person name="Xiao Y.-L."/>
            <person name="Malik M."/>
            <person name="Whitelaw C.A."/>
            <person name="Town C.D."/>
        </authorList>
    </citation>
    <scope>NUCLEOTIDE SEQUENCE [LARGE SCALE MRNA] OF 434-778 (ISOFORM 1)</scope>
    <source>
        <strain>cv. Columbia</strain>
    </source>
</reference>
<reference key="5">
    <citation type="journal article" date="2006" name="Plant Biotechnol. J.">
        <title>Simultaneous high-throughput recombinational cloning of open reading frames in closed and open configurations.</title>
        <authorList>
            <person name="Underwood B.A."/>
            <person name="Vanderhaeghen R."/>
            <person name="Whitford R."/>
            <person name="Town C.D."/>
            <person name="Hilson P."/>
        </authorList>
    </citation>
    <scope>NUCLEOTIDE SEQUENCE [LARGE SCALE MRNA] OF 447-727 (ISOFORM 3)</scope>
    <source>
        <strain>cv. Columbia</strain>
    </source>
</reference>
<reference key="6">
    <citation type="submission" date="2004-10" db="EMBL/GenBank/DDBJ databases">
        <authorList>
            <person name="Underwood B.A."/>
            <person name="Xiao Y.-L."/>
            <person name="Moskal W.A. Jr."/>
            <person name="Monaghan E.L."/>
            <person name="Wang W."/>
            <person name="Redman J.C."/>
            <person name="Wu H.C."/>
            <person name="Utterback T."/>
            <person name="Town C.D."/>
        </authorList>
    </citation>
    <scope>NUCLEOTIDE SEQUENCE [LARGE SCALE MRNA] OF 447-778 (ISOFORM 1)</scope>
    <source>
        <strain>cv. Columbia</strain>
    </source>
</reference>
<reference key="7">
    <citation type="journal article" date="2017" name="Nat. Commun.">
        <title>PCH1 and PCHL promote photomorphogenesis in plants by controlling phytochrome B dark reversion.</title>
        <authorList>
            <person name="Enderle B."/>
            <person name="Sheerin D.J."/>
            <person name="Paik I."/>
            <person name="Kathare P.K."/>
            <person name="Schwenk P."/>
            <person name="Klose C."/>
            <person name="Ulbrich M.H."/>
            <person name="Huq E."/>
            <person name="Hiltbrunner A."/>
        </authorList>
    </citation>
    <scope>FUNCTION</scope>
    <scope>DISRUPTION PHENOTYPE</scope>
    <scope>INDUCTION BY FAR-RED AND BLUE LIGHTS</scope>
    <scope>INTERACTION WITH LIGHT-ACTIVATED PHYB</scope>
    <scope>SUBCELLULAR LOCATION</scope>
    <scope>TISSUE SPECIFICITY</scope>
    <source>
        <strain>cv. Columbia</strain>
    </source>
</reference>
<reference key="8">
    <citation type="journal article" date="2020" name="Mol. Plant">
        <title>PCH1 and PCHL directly interact with PIF1, promote its degradation, and inhibit its transcriptional function during photomorphogenesis.</title>
        <authorList>
            <person name="Cheng M.-C."/>
            <person name="Enderle B."/>
            <person name="Kathare P.K."/>
            <person name="Islam R."/>
            <person name="Hiltbrunner A."/>
            <person name="Huq E."/>
        </authorList>
    </citation>
    <scope>FUNCTION</scope>
    <scope>DISRUPTION PHENOTYPE</scope>
    <scope>INTERACTION WITH PIF1 AND COP1</scope>
    <scope>UBIQUITINATION</scope>
    <source>
        <strain>cv. Columbia</strain>
    </source>
</reference>
<name>PCH1_ARATH</name>
<dbReference type="EMBL" id="AC007047">
    <property type="protein sequence ID" value="AAD22304.2"/>
    <property type="molecule type" value="Genomic_DNA"/>
</dbReference>
<dbReference type="EMBL" id="CP002685">
    <property type="protein sequence ID" value="AEC06484.1"/>
    <property type="molecule type" value="Genomic_DNA"/>
</dbReference>
<dbReference type="EMBL" id="CP002685">
    <property type="protein sequence ID" value="AEC06485.1"/>
    <property type="molecule type" value="Genomic_DNA"/>
</dbReference>
<dbReference type="EMBL" id="CP002685">
    <property type="protein sequence ID" value="AEC06486.1"/>
    <property type="molecule type" value="Genomic_DNA"/>
</dbReference>
<dbReference type="EMBL" id="CP002685">
    <property type="protein sequence ID" value="AEC06487.1"/>
    <property type="molecule type" value="Genomic_DNA"/>
</dbReference>
<dbReference type="EMBL" id="CP002685">
    <property type="protein sequence ID" value="ANM61300.1"/>
    <property type="molecule type" value="Genomic_DNA"/>
</dbReference>
<dbReference type="EMBL" id="CP002685">
    <property type="protein sequence ID" value="ANM61301.1"/>
    <property type="molecule type" value="Genomic_DNA"/>
</dbReference>
<dbReference type="EMBL" id="AY042900">
    <property type="protein sequence ID" value="AAK68840.1"/>
    <property type="molecule type" value="mRNA"/>
</dbReference>
<dbReference type="EMBL" id="BT006598">
    <property type="protein sequence ID" value="AAP31942.1"/>
    <property type="molecule type" value="mRNA"/>
</dbReference>
<dbReference type="EMBL" id="AY227650">
    <property type="protein sequence ID" value="AAO73431.1"/>
    <property type="status" value="ALT_INIT"/>
    <property type="molecule type" value="mRNA"/>
</dbReference>
<dbReference type="EMBL" id="DQ446505">
    <property type="protein sequence ID" value="ABE65815.1"/>
    <property type="molecule type" value="mRNA"/>
</dbReference>
<dbReference type="EMBL" id="AY773845">
    <property type="protein sequence ID" value="AAV63874.1"/>
    <property type="molecule type" value="mRNA"/>
</dbReference>
<dbReference type="PIR" id="C84539">
    <property type="entry name" value="C84539"/>
</dbReference>
<dbReference type="RefSeq" id="NP_001118328.1">
    <molecule id="Q84V03-1"/>
    <property type="nucleotide sequence ID" value="NM_001124856.2"/>
</dbReference>
<dbReference type="RefSeq" id="NP_001118329.1">
    <molecule id="Q84V03-3"/>
    <property type="nucleotide sequence ID" value="NM_001124857.2"/>
</dbReference>
<dbReference type="RefSeq" id="NP_001323527.1">
    <molecule id="Q84V03-2"/>
    <property type="nucleotide sequence ID" value="NM_001335470.1"/>
</dbReference>
<dbReference type="RefSeq" id="NP_001323528.1">
    <molecule id="Q84V03-2"/>
    <property type="nucleotide sequence ID" value="NM_001335471.1"/>
</dbReference>
<dbReference type="RefSeq" id="NP_671856.2">
    <molecule id="Q84V03-1"/>
    <property type="nucleotide sequence ID" value="NM_147321.2"/>
</dbReference>
<dbReference type="RefSeq" id="NP_973716.1">
    <molecule id="Q84V03-2"/>
    <property type="nucleotide sequence ID" value="NM_201987.2"/>
</dbReference>
<dbReference type="BioGRID" id="1491">
    <property type="interactions" value="18"/>
</dbReference>
<dbReference type="FunCoup" id="Q84V03">
    <property type="interactions" value="13"/>
</dbReference>
<dbReference type="STRING" id="3702.Q84V03"/>
<dbReference type="iPTMnet" id="Q84V03"/>
<dbReference type="PaxDb" id="3702-AT2G16365.1"/>
<dbReference type="ProteomicsDB" id="230884">
    <molecule id="Q84V03-1"/>
</dbReference>
<dbReference type="EnsemblPlants" id="AT2G16365.1">
    <molecule id="Q84V03-1"/>
    <property type="protein sequence ID" value="AT2G16365.1"/>
    <property type="gene ID" value="AT2G16365"/>
</dbReference>
<dbReference type="EnsemblPlants" id="AT2G16365.2">
    <molecule id="Q84V03-2"/>
    <property type="protein sequence ID" value="AT2G16365.2"/>
    <property type="gene ID" value="AT2G16365"/>
</dbReference>
<dbReference type="EnsemblPlants" id="AT2G16365.3">
    <molecule id="Q84V03-1"/>
    <property type="protein sequence ID" value="AT2G16365.3"/>
    <property type="gene ID" value="AT2G16365"/>
</dbReference>
<dbReference type="EnsemblPlants" id="AT2G16365.4">
    <molecule id="Q84V03-3"/>
    <property type="protein sequence ID" value="AT2G16365.4"/>
    <property type="gene ID" value="AT2G16365"/>
</dbReference>
<dbReference type="EnsemblPlants" id="AT2G16365.5">
    <molecule id="Q84V03-2"/>
    <property type="protein sequence ID" value="AT2G16365.5"/>
    <property type="gene ID" value="AT2G16365"/>
</dbReference>
<dbReference type="EnsemblPlants" id="AT2G16365.6">
    <molecule id="Q84V03-2"/>
    <property type="protein sequence ID" value="AT2G16365.6"/>
    <property type="gene ID" value="AT2G16365"/>
</dbReference>
<dbReference type="GeneID" id="816133"/>
<dbReference type="Gramene" id="AT2G16365.1">
    <molecule id="Q84V03-1"/>
    <property type="protein sequence ID" value="AT2G16365.1"/>
    <property type="gene ID" value="AT2G16365"/>
</dbReference>
<dbReference type="Gramene" id="AT2G16365.2">
    <molecule id="Q84V03-2"/>
    <property type="protein sequence ID" value="AT2G16365.2"/>
    <property type="gene ID" value="AT2G16365"/>
</dbReference>
<dbReference type="Gramene" id="AT2G16365.3">
    <molecule id="Q84V03-1"/>
    <property type="protein sequence ID" value="AT2G16365.3"/>
    <property type="gene ID" value="AT2G16365"/>
</dbReference>
<dbReference type="Gramene" id="AT2G16365.4">
    <molecule id="Q84V03-3"/>
    <property type="protein sequence ID" value="AT2G16365.4"/>
    <property type="gene ID" value="AT2G16365"/>
</dbReference>
<dbReference type="Gramene" id="AT2G16365.5">
    <molecule id="Q84V03-2"/>
    <property type="protein sequence ID" value="AT2G16365.5"/>
    <property type="gene ID" value="AT2G16365"/>
</dbReference>
<dbReference type="Gramene" id="AT2G16365.6">
    <molecule id="Q84V03-2"/>
    <property type="protein sequence ID" value="AT2G16365.6"/>
    <property type="gene ID" value="AT2G16365"/>
</dbReference>
<dbReference type="KEGG" id="ath:AT2G16365"/>
<dbReference type="Araport" id="AT2G16365"/>
<dbReference type="TAIR" id="AT2G16365">
    <property type="gene designation" value="PCH1"/>
</dbReference>
<dbReference type="eggNOG" id="ENOG502QVXQ">
    <property type="taxonomic scope" value="Eukaryota"/>
</dbReference>
<dbReference type="HOGENOM" id="CLU_381014_0_0_1"/>
<dbReference type="InParanoid" id="Q84V03"/>
<dbReference type="OMA" id="HESAWLG"/>
<dbReference type="PRO" id="PR:Q84V03"/>
<dbReference type="Proteomes" id="UP000006548">
    <property type="component" value="Chromosome 2"/>
</dbReference>
<dbReference type="ExpressionAtlas" id="Q84V03">
    <property type="expression patterns" value="baseline and differential"/>
</dbReference>
<dbReference type="GO" id="GO:0005634">
    <property type="term" value="C:nucleus"/>
    <property type="evidence" value="ECO:0000314"/>
    <property type="project" value="UniProtKB"/>
</dbReference>
<dbReference type="GO" id="GO:0009658">
    <property type="term" value="P:chloroplast organization"/>
    <property type="evidence" value="ECO:0000315"/>
    <property type="project" value="TAIR"/>
</dbReference>
<dbReference type="GO" id="GO:0007623">
    <property type="term" value="P:circadian rhythm"/>
    <property type="evidence" value="ECO:0000270"/>
    <property type="project" value="TAIR"/>
</dbReference>
<dbReference type="GO" id="GO:0045893">
    <property type="term" value="P:positive regulation of DNA-templated transcription"/>
    <property type="evidence" value="ECO:0000315"/>
    <property type="project" value="TAIR"/>
</dbReference>
<dbReference type="GO" id="GO:0010017">
    <property type="term" value="P:red or far-red light signaling pathway"/>
    <property type="evidence" value="ECO:0000315"/>
    <property type="project" value="UniProtKB"/>
</dbReference>
<dbReference type="GO" id="GO:0010099">
    <property type="term" value="P:regulation of photomorphogenesis"/>
    <property type="evidence" value="ECO:0000315"/>
    <property type="project" value="UniProtKB"/>
</dbReference>
<dbReference type="GO" id="GO:0090227">
    <property type="term" value="P:regulation of red or far-red light signaling pathway"/>
    <property type="evidence" value="ECO:0000315"/>
    <property type="project" value="UniProtKB"/>
</dbReference>
<dbReference type="GO" id="GO:0009637">
    <property type="term" value="P:response to blue light"/>
    <property type="evidence" value="ECO:0000270"/>
    <property type="project" value="UniProtKB"/>
</dbReference>
<dbReference type="GO" id="GO:0010218">
    <property type="term" value="P:response to far red light"/>
    <property type="evidence" value="ECO:0000270"/>
    <property type="project" value="UniProtKB"/>
</dbReference>
<dbReference type="GO" id="GO:0010114">
    <property type="term" value="P:response to red light"/>
    <property type="evidence" value="ECO:0000315"/>
    <property type="project" value="UniProtKB"/>
</dbReference>
<dbReference type="CDD" id="cd09917">
    <property type="entry name" value="F-box_SF"/>
    <property type="match status" value="1"/>
</dbReference>
<dbReference type="InterPro" id="IPR036047">
    <property type="entry name" value="F-box-like_dom_sf"/>
</dbReference>
<dbReference type="InterPro" id="IPR001810">
    <property type="entry name" value="F-box_dom"/>
</dbReference>
<dbReference type="InterPro" id="IPR005174">
    <property type="entry name" value="KIB1-4_b-propeller"/>
</dbReference>
<dbReference type="InterPro" id="IPR037476">
    <property type="entry name" value="PCH1"/>
</dbReference>
<dbReference type="PANTHER" id="PTHR36062:SF7">
    <property type="entry name" value="BNAA07G03600D PROTEIN"/>
    <property type="match status" value="1"/>
</dbReference>
<dbReference type="PANTHER" id="PTHR36062">
    <property type="entry name" value="OS01G0687300 PROTEIN"/>
    <property type="match status" value="1"/>
</dbReference>
<dbReference type="Pfam" id="PF03478">
    <property type="entry name" value="Beta-prop_KIB1-4"/>
    <property type="match status" value="1"/>
</dbReference>
<dbReference type="Pfam" id="PF00646">
    <property type="entry name" value="F-box"/>
    <property type="match status" value="1"/>
</dbReference>
<dbReference type="SMART" id="SM00256">
    <property type="entry name" value="FBOX"/>
    <property type="match status" value="1"/>
</dbReference>
<dbReference type="SUPFAM" id="SSF81383">
    <property type="entry name" value="F-box domain"/>
    <property type="match status" value="1"/>
</dbReference>
<comment type="function">
    <text evidence="2 3">Together with PCHL, regulates growth and development adaptation to the ambient environment by controlling negatively phytochrome B (phyB) dark reversion, a temperature-dependent thermal relaxation process during which phyB reverts from the active to the inactive state (PubMed:29263319, PubMed:32061894). Contributes to red (R) light-triggered photomorphogenesis (PubMed:29263319). Promotes various light responses such as seed germination, hypocotyl gravitropism and chlorophyll biosynthesis, via direct interaction with PIF1 and COP1 (PubMed:32061894). Prevents DNA-binding ability of PIF1 to negatively regulate the expressions of its target genes (PubMed:32061894). Facilitates the physical interaction between phyB and PIF1 and the subsequent light-induced degradation of PIF1 (PubMed:32061894).</text>
</comment>
<comment type="subunit">
    <text evidence="2 3">Interacts with light-activated phyB (PubMed:29263319). Binds directly to PIF1 and COP1 (PubMed:32061894).</text>
</comment>
<comment type="subcellular location">
    <subcellularLocation>
        <location evidence="2">Nucleus</location>
    </subcellularLocation>
    <text evidence="2">Observed in subnuclear light-induced structures called photobodies.</text>
</comment>
<comment type="alternative products">
    <event type="alternative splicing"/>
    <isoform>
        <id>Q84V03-1</id>
        <name>1</name>
        <sequence type="displayed"/>
    </isoform>
    <isoform>
        <id>Q84V03-2</id>
        <name>2</name>
        <sequence type="described" ref="VSP_039574 VSP_039575"/>
    </isoform>
    <isoform>
        <id>Q84V03-3</id>
        <name>3</name>
        <sequence type="described" ref="VSP_039573 VSP_039576"/>
    </isoform>
</comment>
<comment type="tissue specificity">
    <text evidence="2">Mainly expressed in cotyledons, hypocotyls, leaves and roots.</text>
</comment>
<comment type="induction">
    <text evidence="2 3">Induced by far-red (FR) and blue (B) lights, as well as transiently following transition from darkness to red light (R) in a phyB-independent manner; responses to red and far-red lights depend on phyA, and responses to blue light rely on both phyA and cryptochromes (PubMed:29263319). In the dark, binds to COP1 and undergo degradation through the 26S proteasome pathway (PubMed:32061894).</text>
</comment>
<comment type="PTM">
    <text evidence="3">Ubiquitinated by COP1 in darkness; this leads to proteasomal degradation.</text>
</comment>
<comment type="disruption phenotype">
    <text evidence="2 3">Reduced seed germination in red (R) light; this phenotype is reversed in plants lacking PIF1 (PubMed:32061894). Reduced PIF1 degradation in response to red light pulse (PubMed:32061894). Hypersensitivity to gravity stimulus and increased greening (PubMed:32061894). Increased hypocotyl growth independently of far-red (FR) pulse at light-off, as the result of a rapid loss of active phyB due to increased dark reversion (PubMed:29263319). Suppression of cop1 phenotype in darkness (PubMed:32061894). Highly unstable phyB-containing photobodies in plants lacking both PCH1 and PCHL (PubMed:29263319).</text>
</comment>
<comment type="sequence caution" evidence="7">
    <conflict type="erroneous initiation">
        <sequence resource="EMBL-CDS" id="AAO73431"/>
    </conflict>
    <text>Truncated N-terminus.</text>
</comment>
<sequence>MSEHVMVLGKGNKGISKNSSVNPYESAWLGRWTQSGSEVKFHDGETNCSKQLIRPEDENHGVEVLPFPMFKVSQKRETTTTTTTKPSFHEDVGSSSRAMVNRMPWMYPQGENFSSSNRLDFPIQEKTTQNLLELIRPVRIYATVDSVNLPKEDSHQLLKGSTVSMKLKGKIFGGYLDLFPNQDHSHNRGGVRLQSLESSKDTQEDGPRKNESSAETNTLEMDRLQTIHLSGSISSSSTKGKGIKGYSAIPRTEIPDMNEEPPLVPDRENSVDGHQGETSNSATQSMNVEHFLSRDCKRVRLEPEVEASSRWVKRLKTSPSDSSETKSMMKMKEASLGEKENNNLFLEILKSGINNLQPRNQEPVVSQSNDLRQGGDDITLLHPWIQRWCKKKTTSTDQPTGQEASFEPESHKEFEKKQYPSIAAMALMGKALSGLNPYGLRKTNSLMVWNARDLSFTYRSLRWNLTMADWPLLPNDLLELIMGHLETSFEIFLFRSVCSSWRSVVPPLDHSRCLGIKTHDISFNVGFSFNGRPTNEYCTLKKIPIYLVKFWTPFGDDYLLAEMRERNDGEPKLLLSPLSSNGIKYGMGINKVLFNSLTSPIIPFGQYYEITYIEKRPSEYRFGFPYKLEWVEITERVEFLKLDSEDSRDFAVLFAGRMCNLVMYRSRNMSWTQVVEHPEKYAYQDLVAFKGKFYAVDSSGRGRVFVVELSFEVTEIPSVGGSQQSSKESLVQSGEELLLVQRFTPVGRRYDEYIYIHGSECLDLMKKEERESGFKLMT</sequence>
<organism>
    <name type="scientific">Arabidopsis thaliana</name>
    <name type="common">Mouse-ear cress</name>
    <dbReference type="NCBI Taxonomy" id="3702"/>
    <lineage>
        <taxon>Eukaryota</taxon>
        <taxon>Viridiplantae</taxon>
        <taxon>Streptophyta</taxon>
        <taxon>Embryophyta</taxon>
        <taxon>Tracheophyta</taxon>
        <taxon>Spermatophyta</taxon>
        <taxon>Magnoliopsida</taxon>
        <taxon>eudicotyledons</taxon>
        <taxon>Gunneridae</taxon>
        <taxon>Pentapetalae</taxon>
        <taxon>rosids</taxon>
        <taxon>malvids</taxon>
        <taxon>Brassicales</taxon>
        <taxon>Brassicaceae</taxon>
        <taxon>Camelineae</taxon>
        <taxon>Arabidopsis</taxon>
    </lineage>
</organism>
<feature type="chain" id="PRO_0000396064" description="Protein PHOTOPERIODIC CONTROL OF HYPOCOTYL 1">
    <location>
        <begin position="1"/>
        <end position="778"/>
    </location>
</feature>
<feature type="domain" description="F-box">
    <location>
        <begin position="470"/>
        <end position="505"/>
    </location>
</feature>
<feature type="region of interest" description="Disordered" evidence="1">
    <location>
        <begin position="74"/>
        <end position="95"/>
    </location>
</feature>
<feature type="region of interest" description="Disordered" evidence="1">
    <location>
        <begin position="186"/>
        <end position="283"/>
    </location>
</feature>
<feature type="region of interest" description="Disordered" evidence="1">
    <location>
        <begin position="316"/>
        <end position="335"/>
    </location>
</feature>
<feature type="compositionally biased region" description="Basic and acidic residues" evidence="1">
    <location>
        <begin position="198"/>
        <end position="212"/>
    </location>
</feature>
<feature type="compositionally biased region" description="Low complexity" evidence="1">
    <location>
        <begin position="230"/>
        <end position="247"/>
    </location>
</feature>
<feature type="compositionally biased region" description="Basic and acidic residues" evidence="1">
    <location>
        <begin position="265"/>
        <end position="275"/>
    </location>
</feature>
<feature type="compositionally biased region" description="Polar residues" evidence="1">
    <location>
        <begin position="317"/>
        <end position="326"/>
    </location>
</feature>
<feature type="splice variant" id="VSP_039573" description="In isoform 3." evidence="5">
    <location>
        <begin position="455"/>
        <end position="458"/>
    </location>
</feature>
<feature type="splice variant" id="VSP_039574" description="In isoform 2." evidence="4">
    <original>S</original>
    <variation>R</variation>
    <location>
        <position position="455"/>
    </location>
</feature>
<feature type="splice variant" id="VSP_039575" description="In isoform 2." evidence="4">
    <location>
        <begin position="456"/>
        <end position="778"/>
    </location>
</feature>
<feature type="splice variant" id="VSP_039576" description="In isoform 3." evidence="5">
    <location>
        <begin position="515"/>
        <end position="561"/>
    </location>
</feature>
<proteinExistence type="evidence at protein level"/>